<gene>
    <name evidence="1" type="primary">psiE</name>
    <name type="ordered locus">Spro_4475</name>
</gene>
<keyword id="KW-0997">Cell inner membrane</keyword>
<keyword id="KW-1003">Cell membrane</keyword>
<keyword id="KW-0472">Membrane</keyword>
<keyword id="KW-0812">Transmembrane</keyword>
<keyword id="KW-1133">Transmembrane helix</keyword>
<dbReference type="EMBL" id="CP000826">
    <property type="protein sequence ID" value="ABV43569.1"/>
    <property type="molecule type" value="Genomic_DNA"/>
</dbReference>
<dbReference type="SMR" id="A8GKC9"/>
<dbReference type="STRING" id="399741.Spro_4475"/>
<dbReference type="KEGG" id="spe:Spro_4475"/>
<dbReference type="eggNOG" id="COG3223">
    <property type="taxonomic scope" value="Bacteria"/>
</dbReference>
<dbReference type="HOGENOM" id="CLU_127561_0_0_6"/>
<dbReference type="OrthoDB" id="9792470at2"/>
<dbReference type="GO" id="GO:0005886">
    <property type="term" value="C:plasma membrane"/>
    <property type="evidence" value="ECO:0007669"/>
    <property type="project" value="UniProtKB-SubCell"/>
</dbReference>
<dbReference type="GO" id="GO:0016036">
    <property type="term" value="P:cellular response to phosphate starvation"/>
    <property type="evidence" value="ECO:0007669"/>
    <property type="project" value="InterPro"/>
</dbReference>
<dbReference type="HAMAP" id="MF_01048">
    <property type="entry name" value="PsiE"/>
    <property type="match status" value="1"/>
</dbReference>
<dbReference type="InterPro" id="IPR009315">
    <property type="entry name" value="P_starv_induced_PsiE"/>
</dbReference>
<dbReference type="InterPro" id="IPR020948">
    <property type="entry name" value="P_starv_induced_PsiE-like"/>
</dbReference>
<dbReference type="NCBIfam" id="NF002764">
    <property type="entry name" value="PRK02833.1-2"/>
    <property type="match status" value="1"/>
</dbReference>
<dbReference type="NCBIfam" id="NF002765">
    <property type="entry name" value="PRK02833.1-3"/>
    <property type="match status" value="1"/>
</dbReference>
<dbReference type="PANTHER" id="PTHR37819">
    <property type="entry name" value="PROTEIN PSIE"/>
    <property type="match status" value="1"/>
</dbReference>
<dbReference type="PANTHER" id="PTHR37819:SF1">
    <property type="entry name" value="PROTEIN PSIE"/>
    <property type="match status" value="1"/>
</dbReference>
<dbReference type="Pfam" id="PF06146">
    <property type="entry name" value="PsiE"/>
    <property type="match status" value="1"/>
</dbReference>
<dbReference type="PIRSF" id="PIRSF029598">
    <property type="entry name" value="PsiE"/>
    <property type="match status" value="1"/>
</dbReference>
<evidence type="ECO:0000255" key="1">
    <source>
        <dbReference type="HAMAP-Rule" id="MF_01048"/>
    </source>
</evidence>
<reference key="1">
    <citation type="submission" date="2007-09" db="EMBL/GenBank/DDBJ databases">
        <title>Complete sequence of chromosome of Serratia proteamaculans 568.</title>
        <authorList>
            <consortium name="US DOE Joint Genome Institute"/>
            <person name="Copeland A."/>
            <person name="Lucas S."/>
            <person name="Lapidus A."/>
            <person name="Barry K."/>
            <person name="Glavina del Rio T."/>
            <person name="Dalin E."/>
            <person name="Tice H."/>
            <person name="Pitluck S."/>
            <person name="Chain P."/>
            <person name="Malfatti S."/>
            <person name="Shin M."/>
            <person name="Vergez L."/>
            <person name="Schmutz J."/>
            <person name="Larimer F."/>
            <person name="Land M."/>
            <person name="Hauser L."/>
            <person name="Kyrpides N."/>
            <person name="Kim E."/>
            <person name="Taghavi S."/>
            <person name="Newman L."/>
            <person name="Vangronsveld J."/>
            <person name="van der Lelie D."/>
            <person name="Richardson P."/>
        </authorList>
    </citation>
    <scope>NUCLEOTIDE SEQUENCE [LARGE SCALE GENOMIC DNA]</scope>
    <source>
        <strain>568</strain>
    </source>
</reference>
<sequence length="135" mass="15484">MAKTSRSVMIAKGLQRVLNVGLLLLAAILIVFLVKETIHLAKVLFVNNEESTSYLLIEGIVIYFLYFEFIALIVKYFESGYHFPLRYFIYIGITAIIRLIIVDHENPIDTLIYSAAILLLVVTLYLANTDRLKRE</sequence>
<proteinExistence type="inferred from homology"/>
<protein>
    <recommendedName>
        <fullName evidence="1">Protein PsiE homolog</fullName>
    </recommendedName>
</protein>
<comment type="subcellular location">
    <subcellularLocation>
        <location evidence="1">Cell inner membrane</location>
        <topology evidence="1">Multi-pass membrane protein</topology>
    </subcellularLocation>
</comment>
<comment type="similarity">
    <text evidence="1">Belongs to the PsiE family.</text>
</comment>
<name>PSIE_SERP5</name>
<feature type="chain" id="PRO_1000064318" description="Protein PsiE homolog">
    <location>
        <begin position="1"/>
        <end position="135"/>
    </location>
</feature>
<feature type="transmembrane region" description="Helical" evidence="1">
    <location>
        <begin position="20"/>
        <end position="40"/>
    </location>
</feature>
<feature type="transmembrane region" description="Helical" evidence="1">
    <location>
        <begin position="54"/>
        <end position="74"/>
    </location>
</feature>
<feature type="transmembrane region" description="Helical" evidence="1">
    <location>
        <begin position="82"/>
        <end position="102"/>
    </location>
</feature>
<feature type="transmembrane region" description="Helical" evidence="1">
    <location>
        <begin position="107"/>
        <end position="127"/>
    </location>
</feature>
<accession>A8GKC9</accession>
<organism>
    <name type="scientific">Serratia proteamaculans (strain 568)</name>
    <dbReference type="NCBI Taxonomy" id="399741"/>
    <lineage>
        <taxon>Bacteria</taxon>
        <taxon>Pseudomonadati</taxon>
        <taxon>Pseudomonadota</taxon>
        <taxon>Gammaproteobacteria</taxon>
        <taxon>Enterobacterales</taxon>
        <taxon>Yersiniaceae</taxon>
        <taxon>Serratia</taxon>
    </lineage>
</organism>